<reference key="1">
    <citation type="journal article" date="2001" name="Nature">
        <title>Complete genome sequence of a multiple drug resistant Salmonella enterica serovar Typhi CT18.</title>
        <authorList>
            <person name="Parkhill J."/>
            <person name="Dougan G."/>
            <person name="James K.D."/>
            <person name="Thomson N.R."/>
            <person name="Pickard D."/>
            <person name="Wain J."/>
            <person name="Churcher C.M."/>
            <person name="Mungall K.L."/>
            <person name="Bentley S.D."/>
            <person name="Holden M.T.G."/>
            <person name="Sebaihia M."/>
            <person name="Baker S."/>
            <person name="Basham D."/>
            <person name="Brooks K."/>
            <person name="Chillingworth T."/>
            <person name="Connerton P."/>
            <person name="Cronin A."/>
            <person name="Davis P."/>
            <person name="Davies R.M."/>
            <person name="Dowd L."/>
            <person name="White N."/>
            <person name="Farrar J."/>
            <person name="Feltwell T."/>
            <person name="Hamlin N."/>
            <person name="Haque A."/>
            <person name="Hien T.T."/>
            <person name="Holroyd S."/>
            <person name="Jagels K."/>
            <person name="Krogh A."/>
            <person name="Larsen T.S."/>
            <person name="Leather S."/>
            <person name="Moule S."/>
            <person name="O'Gaora P."/>
            <person name="Parry C."/>
            <person name="Quail M.A."/>
            <person name="Rutherford K.M."/>
            <person name="Simmonds M."/>
            <person name="Skelton J."/>
            <person name="Stevens K."/>
            <person name="Whitehead S."/>
            <person name="Barrell B.G."/>
        </authorList>
    </citation>
    <scope>NUCLEOTIDE SEQUENCE [LARGE SCALE GENOMIC DNA]</scope>
    <source>
        <strain>CT18</strain>
    </source>
</reference>
<reference key="2">
    <citation type="journal article" date="2003" name="J. Bacteriol.">
        <title>Comparative genomics of Salmonella enterica serovar Typhi strains Ty2 and CT18.</title>
        <authorList>
            <person name="Deng W."/>
            <person name="Liou S.-R."/>
            <person name="Plunkett G. III"/>
            <person name="Mayhew G.F."/>
            <person name="Rose D.J."/>
            <person name="Burland V."/>
            <person name="Kodoyianni V."/>
            <person name="Schwartz D.C."/>
            <person name="Blattner F.R."/>
        </authorList>
    </citation>
    <scope>NUCLEOTIDE SEQUENCE [LARGE SCALE GENOMIC DNA]</scope>
    <source>
        <strain>ATCC 700931 / Ty2</strain>
    </source>
</reference>
<evidence type="ECO:0000255" key="1">
    <source>
        <dbReference type="HAMAP-Rule" id="MF_00336"/>
    </source>
</evidence>
<feature type="chain" id="PRO_0000187986" description="ATP-dependent dethiobiotin synthetase BioD 2">
    <location>
        <begin position="1"/>
        <end position="231"/>
    </location>
</feature>
<feature type="active site" evidence="1">
    <location>
        <position position="38"/>
    </location>
</feature>
<feature type="binding site" evidence="1">
    <location>
        <begin position="13"/>
        <end position="18"/>
    </location>
    <ligand>
        <name>ATP</name>
        <dbReference type="ChEBI" id="CHEBI:30616"/>
    </ligand>
</feature>
<feature type="binding site" evidence="1">
    <location>
        <position position="17"/>
    </location>
    <ligand>
        <name>Mg(2+)</name>
        <dbReference type="ChEBI" id="CHEBI:18420"/>
    </ligand>
</feature>
<feature type="binding site" evidence="1">
    <location>
        <position position="55"/>
    </location>
    <ligand>
        <name>ATP</name>
        <dbReference type="ChEBI" id="CHEBI:30616"/>
    </ligand>
</feature>
<feature type="binding site" evidence="1">
    <location>
        <position position="55"/>
    </location>
    <ligand>
        <name>Mg(2+)</name>
        <dbReference type="ChEBI" id="CHEBI:18420"/>
    </ligand>
</feature>
<feature type="binding site" evidence="1">
    <location>
        <begin position="112"/>
        <end position="115"/>
    </location>
    <ligand>
        <name>ATP</name>
        <dbReference type="ChEBI" id="CHEBI:30616"/>
    </ligand>
</feature>
<feature type="binding site" evidence="1">
    <location>
        <position position="112"/>
    </location>
    <ligand>
        <name>Mg(2+)</name>
        <dbReference type="ChEBI" id="CHEBI:18420"/>
    </ligand>
</feature>
<feature type="binding site" evidence="1">
    <location>
        <begin position="172"/>
        <end position="173"/>
    </location>
    <ligand>
        <name>ATP</name>
        <dbReference type="ChEBI" id="CHEBI:30616"/>
    </ligand>
</feature>
<feature type="binding site" evidence="1">
    <location>
        <begin position="201"/>
        <end position="203"/>
    </location>
    <ligand>
        <name>ATP</name>
        <dbReference type="ChEBI" id="CHEBI:30616"/>
    </ligand>
</feature>
<feature type="binding site" evidence="1">
    <location>
        <position position="208"/>
    </location>
    <ligand>
        <name>ATP</name>
        <dbReference type="ChEBI" id="CHEBI:30616"/>
    </ligand>
</feature>
<gene>
    <name evidence="1" type="primary">bioD2</name>
    <name type="synonym">ynfK</name>
    <name type="ordered locus">STY1575</name>
    <name type="ordered locus">t1410</name>
</gene>
<keyword id="KW-0067">ATP-binding</keyword>
<keyword id="KW-0093">Biotin biosynthesis</keyword>
<keyword id="KW-0963">Cytoplasm</keyword>
<keyword id="KW-0436">Ligase</keyword>
<keyword id="KW-0460">Magnesium</keyword>
<keyword id="KW-0479">Metal-binding</keyword>
<keyword id="KW-0547">Nucleotide-binding</keyword>
<accession>Q8Z6X9</accession>
<proteinExistence type="inferred from homology"/>
<name>BIOD2_SALTI</name>
<sequence length="231" mass="24794">MLKRFFITGTDTSVGKTVVSRALLQALSSGGKSVAGYKPVAKGSKETPEGMRNKDALVLQSVSSLELPYEAINPIALSEEESSVAHSCPINYTLLSNGLASLSDKVDHVVVEGTGGWRSLMNDLRPLSEWVVQEQLPVLMVVGIQEGCINHALLTAQAVANDGLPLIGWVANRINPGLAHYAEIIDVLGKKLPAPLIGELPYLPRAEQRELGQYIRLSMLGSVLAVDRIMA</sequence>
<organism>
    <name type="scientific">Salmonella typhi</name>
    <dbReference type="NCBI Taxonomy" id="90370"/>
    <lineage>
        <taxon>Bacteria</taxon>
        <taxon>Pseudomonadati</taxon>
        <taxon>Pseudomonadota</taxon>
        <taxon>Gammaproteobacteria</taxon>
        <taxon>Enterobacterales</taxon>
        <taxon>Enterobacteriaceae</taxon>
        <taxon>Salmonella</taxon>
    </lineage>
</organism>
<comment type="function">
    <text evidence="1">Catalyzes a mechanistically unusual reaction, the ATP-dependent insertion of CO2 between the N7 and N8 nitrogen atoms of 7,8-diaminopelargonic acid (DAPA, also called 7,8-diammoniononanoate) to form a ureido ring.</text>
</comment>
<comment type="catalytic activity">
    <reaction evidence="1">
        <text>(7R,8S)-7,8-diammoniononanoate + CO2 + ATP = (4R,5S)-dethiobiotin + ADP + phosphate + 3 H(+)</text>
        <dbReference type="Rhea" id="RHEA:15805"/>
        <dbReference type="ChEBI" id="CHEBI:15378"/>
        <dbReference type="ChEBI" id="CHEBI:16526"/>
        <dbReference type="ChEBI" id="CHEBI:30616"/>
        <dbReference type="ChEBI" id="CHEBI:43474"/>
        <dbReference type="ChEBI" id="CHEBI:149469"/>
        <dbReference type="ChEBI" id="CHEBI:149473"/>
        <dbReference type="ChEBI" id="CHEBI:456216"/>
        <dbReference type="EC" id="6.3.3.3"/>
    </reaction>
</comment>
<comment type="cofactor">
    <cofactor evidence="1">
        <name>Mg(2+)</name>
        <dbReference type="ChEBI" id="CHEBI:18420"/>
    </cofactor>
</comment>
<comment type="pathway">
    <text evidence="1">Cofactor biosynthesis; biotin biosynthesis; biotin from 7,8-diaminononanoate: step 1/2.</text>
</comment>
<comment type="subunit">
    <text evidence="1">Homodimer.</text>
</comment>
<comment type="subcellular location">
    <subcellularLocation>
        <location evidence="1">Cytoplasm</location>
    </subcellularLocation>
</comment>
<comment type="similarity">
    <text evidence="1">Belongs to the dethiobiotin synthetase family.</text>
</comment>
<protein>
    <recommendedName>
        <fullName evidence="1">ATP-dependent dethiobiotin synthetase BioD 2</fullName>
        <ecNumber evidence="1">6.3.3.3</ecNumber>
    </recommendedName>
    <alternativeName>
        <fullName evidence="1">DTB synthetase 2</fullName>
        <shortName evidence="1">DTBS 2</shortName>
    </alternativeName>
    <alternativeName>
        <fullName evidence="1">Dethiobiotin synthase 2</fullName>
    </alternativeName>
</protein>
<dbReference type="EC" id="6.3.3.3" evidence="1"/>
<dbReference type="EMBL" id="AL513382">
    <property type="protein sequence ID" value="CAD01824.1"/>
    <property type="molecule type" value="Genomic_DNA"/>
</dbReference>
<dbReference type="EMBL" id="AE014613">
    <property type="protein sequence ID" value="AAO69054.1"/>
    <property type="molecule type" value="Genomic_DNA"/>
</dbReference>
<dbReference type="RefSeq" id="NP_455990.1">
    <property type="nucleotide sequence ID" value="NC_003198.1"/>
</dbReference>
<dbReference type="SMR" id="Q8Z6X9"/>
<dbReference type="STRING" id="220341.gene:17585514"/>
<dbReference type="KEGG" id="stt:t1410"/>
<dbReference type="KEGG" id="sty:STY1575"/>
<dbReference type="PATRIC" id="fig|220341.7.peg.1584"/>
<dbReference type="eggNOG" id="COG0132">
    <property type="taxonomic scope" value="Bacteria"/>
</dbReference>
<dbReference type="HOGENOM" id="CLU_072551_0_0_6"/>
<dbReference type="OMA" id="WRTLMND"/>
<dbReference type="OrthoDB" id="9802097at2"/>
<dbReference type="UniPathway" id="UPA00078">
    <property type="reaction ID" value="UER00161"/>
</dbReference>
<dbReference type="Proteomes" id="UP000000541">
    <property type="component" value="Chromosome"/>
</dbReference>
<dbReference type="Proteomes" id="UP000002670">
    <property type="component" value="Chromosome"/>
</dbReference>
<dbReference type="GO" id="GO:0005829">
    <property type="term" value="C:cytosol"/>
    <property type="evidence" value="ECO:0007669"/>
    <property type="project" value="TreeGrafter"/>
</dbReference>
<dbReference type="GO" id="GO:0005524">
    <property type="term" value="F:ATP binding"/>
    <property type="evidence" value="ECO:0007669"/>
    <property type="project" value="UniProtKB-UniRule"/>
</dbReference>
<dbReference type="GO" id="GO:0004141">
    <property type="term" value="F:dethiobiotin synthase activity"/>
    <property type="evidence" value="ECO:0007669"/>
    <property type="project" value="UniProtKB-UniRule"/>
</dbReference>
<dbReference type="GO" id="GO:0000287">
    <property type="term" value="F:magnesium ion binding"/>
    <property type="evidence" value="ECO:0007669"/>
    <property type="project" value="UniProtKB-UniRule"/>
</dbReference>
<dbReference type="GO" id="GO:0009102">
    <property type="term" value="P:biotin biosynthetic process"/>
    <property type="evidence" value="ECO:0007669"/>
    <property type="project" value="UniProtKB-UniRule"/>
</dbReference>
<dbReference type="CDD" id="cd03109">
    <property type="entry name" value="DTBS"/>
    <property type="match status" value="1"/>
</dbReference>
<dbReference type="FunFam" id="3.40.50.300:FF:000292">
    <property type="entry name" value="ATP-dependent dethiobiotin synthetase BioD"/>
    <property type="match status" value="1"/>
</dbReference>
<dbReference type="Gene3D" id="3.40.50.300">
    <property type="entry name" value="P-loop containing nucleotide triphosphate hydrolases"/>
    <property type="match status" value="1"/>
</dbReference>
<dbReference type="HAMAP" id="MF_00336">
    <property type="entry name" value="BioD"/>
    <property type="match status" value="1"/>
</dbReference>
<dbReference type="InterPro" id="IPR004472">
    <property type="entry name" value="DTB_synth_BioD"/>
</dbReference>
<dbReference type="InterPro" id="IPR027417">
    <property type="entry name" value="P-loop_NTPase"/>
</dbReference>
<dbReference type="NCBIfam" id="TIGR00347">
    <property type="entry name" value="bioD"/>
    <property type="match status" value="1"/>
</dbReference>
<dbReference type="PANTHER" id="PTHR43210:SF4">
    <property type="entry name" value="ATP-DEPENDENT DETHIOBIOTIN SYNTHETASE BIOD 2"/>
    <property type="match status" value="1"/>
</dbReference>
<dbReference type="PANTHER" id="PTHR43210">
    <property type="entry name" value="DETHIOBIOTIN SYNTHETASE"/>
    <property type="match status" value="1"/>
</dbReference>
<dbReference type="Pfam" id="PF13500">
    <property type="entry name" value="AAA_26"/>
    <property type="match status" value="1"/>
</dbReference>
<dbReference type="PIRSF" id="PIRSF006755">
    <property type="entry name" value="DTB_synth"/>
    <property type="match status" value="1"/>
</dbReference>
<dbReference type="SUPFAM" id="SSF52540">
    <property type="entry name" value="P-loop containing nucleoside triphosphate hydrolases"/>
    <property type="match status" value="1"/>
</dbReference>